<organism>
    <name type="scientific">Saccharomyces cerevisiae (strain ATCC 204508 / S288c)</name>
    <name type="common">Baker's yeast</name>
    <dbReference type="NCBI Taxonomy" id="559292"/>
    <lineage>
        <taxon>Eukaryota</taxon>
        <taxon>Fungi</taxon>
        <taxon>Dikarya</taxon>
        <taxon>Ascomycota</taxon>
        <taxon>Saccharomycotina</taxon>
        <taxon>Saccharomycetes</taxon>
        <taxon>Saccharomycetales</taxon>
        <taxon>Saccharomycetaceae</taxon>
        <taxon>Saccharomyces</taxon>
    </lineage>
</organism>
<keyword id="KW-0002">3D-structure</keyword>
<keyword id="KW-0903">Direct protein sequencing</keyword>
<keyword id="KW-1017">Isopeptide bond</keyword>
<keyword id="KW-0551">Lipid droplet</keyword>
<keyword id="KW-0597">Phosphoprotein</keyword>
<keyword id="KW-1185">Reference proteome</keyword>
<keyword id="KW-0832">Ubl conjugation</keyword>
<dbReference type="EMBL" id="Z72871">
    <property type="protein sequence ID" value="CAA97088.1"/>
    <property type="molecule type" value="Genomic_DNA"/>
</dbReference>
<dbReference type="EMBL" id="BK006941">
    <property type="protein sequence ID" value="DAA08179.1"/>
    <property type="molecule type" value="Genomic_DNA"/>
</dbReference>
<dbReference type="PIR" id="S64381">
    <property type="entry name" value="S64381"/>
</dbReference>
<dbReference type="RefSeq" id="NP_011600.3">
    <property type="nucleotide sequence ID" value="NM_001181215.3"/>
</dbReference>
<dbReference type="PDB" id="8QB7">
    <property type="method" value="EM"/>
    <property type="resolution" value="3.20 A"/>
    <property type="chains" value="A/B/C/D/E/F/G/H/I/J/K/L/M/N=1-339"/>
</dbReference>
<dbReference type="PDB" id="8QB9">
    <property type="method" value="EM"/>
    <property type="resolution" value="3.35 A"/>
    <property type="chains" value="A/B/C/D/E/F/G/H/I/J/K/L/M/N=1-339"/>
</dbReference>
<dbReference type="PDB" id="8QBB">
    <property type="method" value="EM"/>
    <property type="resolution" value="3.86 A"/>
    <property type="chains" value="A/B/C/D/E/F/G/H/I/J/K/L/M/N=1-339"/>
</dbReference>
<dbReference type="PDB" id="8QBD">
    <property type="method" value="EM"/>
    <property type="resolution" value="3.61 A"/>
    <property type="chains" value="A/B/C/D/E/F/G/H/I/J/K/L/M/N=1-339"/>
</dbReference>
<dbReference type="PDB" id="8QBE">
    <property type="method" value="EM"/>
    <property type="resolution" value="3.67 A"/>
    <property type="chains" value="A/B/C/D/E/F/G/H/I/J/K/L/M/N=1-339"/>
</dbReference>
<dbReference type="PDB" id="8QBF">
    <property type="method" value="EM"/>
    <property type="resolution" value="3.67 A"/>
    <property type="chains" value="A/B=1-271"/>
</dbReference>
<dbReference type="PDB" id="8QBG">
    <property type="method" value="EM"/>
    <property type="resolution" value="3.64 A"/>
    <property type="chains" value="A/B/C/D/E/F/G/H/I/J/K/L/M/N=1-339"/>
</dbReference>
<dbReference type="PDBsum" id="8QB7"/>
<dbReference type="PDBsum" id="8QB9"/>
<dbReference type="PDBsum" id="8QBB"/>
<dbReference type="PDBsum" id="8QBD"/>
<dbReference type="PDBsum" id="8QBE"/>
<dbReference type="PDBsum" id="8QBF"/>
<dbReference type="PDBsum" id="8QBG"/>
<dbReference type="EMDB" id="EMD-18307"/>
<dbReference type="EMDB" id="EMD-18308"/>
<dbReference type="EMDB" id="EMD-18309"/>
<dbReference type="EMDB" id="EMD-18310"/>
<dbReference type="EMDB" id="EMD-18311"/>
<dbReference type="EMDB" id="EMD-18312"/>
<dbReference type="SMR" id="P53252"/>
<dbReference type="BioGRID" id="33328">
    <property type="interactions" value="623"/>
</dbReference>
<dbReference type="DIP" id="DIP-4618N"/>
<dbReference type="FunCoup" id="P53252">
    <property type="interactions" value="593"/>
</dbReference>
<dbReference type="IntAct" id="P53252">
    <property type="interactions" value="56"/>
</dbReference>
<dbReference type="MINT" id="P53252"/>
<dbReference type="STRING" id="4932.YGR086C"/>
<dbReference type="TCDB" id="8.A.148.1.1">
    <property type="family name" value="the plasma membrane organizing center, eisosome (eisosome) family"/>
</dbReference>
<dbReference type="GlyGen" id="P53252">
    <property type="glycosylation" value="1 site"/>
</dbReference>
<dbReference type="iPTMnet" id="P53252"/>
<dbReference type="PaxDb" id="4932-YGR086C"/>
<dbReference type="PeptideAtlas" id="P53252"/>
<dbReference type="EnsemblFungi" id="YGR086C_mRNA">
    <property type="protein sequence ID" value="YGR086C"/>
    <property type="gene ID" value="YGR086C"/>
</dbReference>
<dbReference type="GeneID" id="852977"/>
<dbReference type="KEGG" id="sce:YGR086C"/>
<dbReference type="AGR" id="SGD:S000003318"/>
<dbReference type="SGD" id="S000003318">
    <property type="gene designation" value="PIL1"/>
</dbReference>
<dbReference type="VEuPathDB" id="FungiDB:YGR086C"/>
<dbReference type="eggNOG" id="ENOG502QQ1T">
    <property type="taxonomic scope" value="Eukaryota"/>
</dbReference>
<dbReference type="GeneTree" id="ENSGT00940000176685"/>
<dbReference type="HOGENOM" id="CLU_046464_0_0_1"/>
<dbReference type="InParanoid" id="P53252"/>
<dbReference type="OMA" id="NRWLGKG"/>
<dbReference type="OrthoDB" id="5599269at2759"/>
<dbReference type="BioCyc" id="YEAST:G3O-30798-MONOMER"/>
<dbReference type="BioGRID-ORCS" id="852977">
    <property type="hits" value="8 hits in 10 CRISPR screens"/>
</dbReference>
<dbReference type="PRO" id="PR:P53252"/>
<dbReference type="Proteomes" id="UP000002311">
    <property type="component" value="Chromosome VII"/>
</dbReference>
<dbReference type="RNAct" id="P53252">
    <property type="molecule type" value="protein"/>
</dbReference>
<dbReference type="GO" id="GO:0071944">
    <property type="term" value="C:cell periphery"/>
    <property type="evidence" value="ECO:0007005"/>
    <property type="project" value="SGD"/>
</dbReference>
<dbReference type="GO" id="GO:0005737">
    <property type="term" value="C:cytoplasm"/>
    <property type="evidence" value="ECO:0007005"/>
    <property type="project" value="SGD"/>
</dbReference>
<dbReference type="GO" id="GO:0032126">
    <property type="term" value="C:eisosome"/>
    <property type="evidence" value="ECO:0000314"/>
    <property type="project" value="SGD"/>
</dbReference>
<dbReference type="GO" id="GO:0036286">
    <property type="term" value="C:eisosome filament"/>
    <property type="evidence" value="ECO:0000318"/>
    <property type="project" value="GO_Central"/>
</dbReference>
<dbReference type="GO" id="GO:0005811">
    <property type="term" value="C:lipid droplet"/>
    <property type="evidence" value="ECO:0007669"/>
    <property type="project" value="UniProtKB-SubCell"/>
</dbReference>
<dbReference type="GO" id="GO:0005741">
    <property type="term" value="C:mitochondrial outer membrane"/>
    <property type="evidence" value="ECO:0000314"/>
    <property type="project" value="SGD"/>
</dbReference>
<dbReference type="GO" id="GO:0005739">
    <property type="term" value="C:mitochondrion"/>
    <property type="evidence" value="ECO:0007005"/>
    <property type="project" value="SGD"/>
</dbReference>
<dbReference type="GO" id="GO:0005886">
    <property type="term" value="C:plasma membrane"/>
    <property type="evidence" value="ECO:0007005"/>
    <property type="project" value="SGD"/>
</dbReference>
<dbReference type="GO" id="GO:0008289">
    <property type="term" value="F:lipid binding"/>
    <property type="evidence" value="ECO:0000314"/>
    <property type="project" value="SGD"/>
</dbReference>
<dbReference type="GO" id="GO:0070941">
    <property type="term" value="P:eisosome assembly"/>
    <property type="evidence" value="ECO:0000315"/>
    <property type="project" value="SGD"/>
</dbReference>
<dbReference type="GO" id="GO:0006897">
    <property type="term" value="P:endocytosis"/>
    <property type="evidence" value="ECO:0000315"/>
    <property type="project" value="SGD"/>
</dbReference>
<dbReference type="GO" id="GO:0008104">
    <property type="term" value="P:protein localization"/>
    <property type="evidence" value="ECO:0000315"/>
    <property type="project" value="SGD"/>
</dbReference>
<dbReference type="GO" id="GO:0097446">
    <property type="term" value="P:protein localization to eisosome filament"/>
    <property type="evidence" value="ECO:0000315"/>
    <property type="project" value="SGD"/>
</dbReference>
<dbReference type="FunFam" id="1.20.1270.60:FF:000005">
    <property type="entry name" value="Sphingolipid long chain base-responsive pil1"/>
    <property type="match status" value="1"/>
</dbReference>
<dbReference type="Gene3D" id="1.20.1270.60">
    <property type="entry name" value="Arfaptin homology (AH) domain/BAR domain"/>
    <property type="match status" value="1"/>
</dbReference>
<dbReference type="InterPro" id="IPR027267">
    <property type="entry name" value="AH/BAR_dom_sf"/>
</dbReference>
<dbReference type="InterPro" id="IPR028245">
    <property type="entry name" value="PIL1/LSP1"/>
</dbReference>
<dbReference type="PANTHER" id="PTHR31962">
    <property type="entry name" value="SPHINGOLIPID LONG CHAIN BASE-RESPONSIVE PROTEIN PIL1"/>
    <property type="match status" value="1"/>
</dbReference>
<dbReference type="PANTHER" id="PTHR31962:SF1">
    <property type="entry name" value="SPHINGOLIPID LONG CHAIN BASE-RESPONSIVE PROTEIN PIL1"/>
    <property type="match status" value="1"/>
</dbReference>
<dbReference type="Pfam" id="PF13805">
    <property type="entry name" value="Pil1"/>
    <property type="match status" value="1"/>
</dbReference>
<accession>P53252</accession>
<accession>D6VUL8</accession>
<gene>
    <name type="primary">PIL1</name>
    <name type="ordered locus">YGR086C</name>
</gene>
<proteinExistence type="evidence at protein level"/>
<protein>
    <recommendedName>
        <fullName>Sphingolipid long chain base-responsive protein PIL1</fullName>
    </recommendedName>
</protein>
<evidence type="ECO:0000256" key="1">
    <source>
        <dbReference type="SAM" id="MobiDB-lite"/>
    </source>
</evidence>
<evidence type="ECO:0000269" key="2">
    <source>
    </source>
</evidence>
<evidence type="ECO:0000269" key="3">
    <source>
    </source>
</evidence>
<evidence type="ECO:0000269" key="4">
    <source>
    </source>
</evidence>
<evidence type="ECO:0007744" key="5">
    <source>
    </source>
</evidence>
<evidence type="ECO:0007744" key="6">
    <source>
    </source>
</evidence>
<evidence type="ECO:0007744" key="7">
    <source>
    </source>
</evidence>
<evidence type="ECO:0007744" key="8">
    <source>
    </source>
</evidence>
<evidence type="ECO:0007744" key="9">
    <source>
    </source>
</evidence>
<evidence type="ECO:0007744" key="10">
    <source>
    </source>
</evidence>
<evidence type="ECO:0007829" key="11">
    <source>
        <dbReference type="PDB" id="8QB7"/>
    </source>
</evidence>
<reference key="1">
    <citation type="journal article" date="1997" name="Nature">
        <title>The nucleotide sequence of Saccharomyces cerevisiae chromosome VII.</title>
        <authorList>
            <person name="Tettelin H."/>
            <person name="Agostoni-Carbone M.L."/>
            <person name="Albermann K."/>
            <person name="Albers M."/>
            <person name="Arroyo J."/>
            <person name="Backes U."/>
            <person name="Barreiros T."/>
            <person name="Bertani I."/>
            <person name="Bjourson A.J."/>
            <person name="Brueckner M."/>
            <person name="Bruschi C.V."/>
            <person name="Carignani G."/>
            <person name="Castagnoli L."/>
            <person name="Cerdan E."/>
            <person name="Clemente M.L."/>
            <person name="Coblenz A."/>
            <person name="Coglievina M."/>
            <person name="Coissac E."/>
            <person name="Defoor E."/>
            <person name="Del Bino S."/>
            <person name="Delius H."/>
            <person name="Delneri D."/>
            <person name="de Wergifosse P."/>
            <person name="Dujon B."/>
            <person name="Durand P."/>
            <person name="Entian K.-D."/>
            <person name="Eraso P."/>
            <person name="Escribano V."/>
            <person name="Fabiani L."/>
            <person name="Fartmann B."/>
            <person name="Feroli F."/>
            <person name="Feuermann M."/>
            <person name="Frontali L."/>
            <person name="Garcia-Gonzalez M."/>
            <person name="Garcia-Saez M.I."/>
            <person name="Goffeau A."/>
            <person name="Guerreiro P."/>
            <person name="Hani J."/>
            <person name="Hansen M."/>
            <person name="Hebling U."/>
            <person name="Hernandez K."/>
            <person name="Heumann K."/>
            <person name="Hilger F."/>
            <person name="Hofmann B."/>
            <person name="Indge K.J."/>
            <person name="James C.M."/>
            <person name="Klima R."/>
            <person name="Koetter P."/>
            <person name="Kramer B."/>
            <person name="Kramer W."/>
            <person name="Lauquin G."/>
            <person name="Leuther H."/>
            <person name="Louis E.J."/>
            <person name="Maillier E."/>
            <person name="Marconi A."/>
            <person name="Martegani E."/>
            <person name="Mazon M.J."/>
            <person name="Mazzoni C."/>
            <person name="McReynolds A.D.K."/>
            <person name="Melchioretto P."/>
            <person name="Mewes H.-W."/>
            <person name="Minenkova O."/>
            <person name="Mueller-Auer S."/>
            <person name="Nawrocki A."/>
            <person name="Netter P."/>
            <person name="Neu R."/>
            <person name="Nombela C."/>
            <person name="Oliver S.G."/>
            <person name="Panzeri L."/>
            <person name="Paoluzi S."/>
            <person name="Plevani P."/>
            <person name="Portetelle D."/>
            <person name="Portillo F."/>
            <person name="Potier S."/>
            <person name="Purnelle B."/>
            <person name="Rieger M."/>
            <person name="Riles L."/>
            <person name="Rinaldi T."/>
            <person name="Robben J."/>
            <person name="Rodrigues-Pousada C."/>
            <person name="Rodriguez-Belmonte E."/>
            <person name="Rodriguez-Torres A.M."/>
            <person name="Rose M."/>
            <person name="Ruzzi M."/>
            <person name="Saliola M."/>
            <person name="Sanchez-Perez M."/>
            <person name="Schaefer B."/>
            <person name="Schaefer M."/>
            <person name="Scharfe M."/>
            <person name="Schmidheini T."/>
            <person name="Schreer A."/>
            <person name="Skala J."/>
            <person name="Souciet J.-L."/>
            <person name="Steensma H.Y."/>
            <person name="Talla E."/>
            <person name="Thierry A."/>
            <person name="Vandenbol M."/>
            <person name="van der Aart Q.J.M."/>
            <person name="Van Dyck L."/>
            <person name="Vanoni M."/>
            <person name="Verhasselt P."/>
            <person name="Voet M."/>
            <person name="Volckaert G."/>
            <person name="Wambutt R."/>
            <person name="Watson M.D."/>
            <person name="Weber N."/>
            <person name="Wedler E."/>
            <person name="Wedler H."/>
            <person name="Wipfli P."/>
            <person name="Wolf K."/>
            <person name="Wright L.F."/>
            <person name="Zaccaria P."/>
            <person name="Zimmermann M."/>
            <person name="Zollner A."/>
            <person name="Kleine K."/>
        </authorList>
    </citation>
    <scope>NUCLEOTIDE SEQUENCE [LARGE SCALE GENOMIC DNA]</scope>
    <source>
        <strain>ATCC 204508 / S288c</strain>
    </source>
</reference>
<reference key="2">
    <citation type="journal article" date="2014" name="G3 (Bethesda)">
        <title>The reference genome sequence of Saccharomyces cerevisiae: Then and now.</title>
        <authorList>
            <person name="Engel S.R."/>
            <person name="Dietrich F.S."/>
            <person name="Fisk D.G."/>
            <person name="Binkley G."/>
            <person name="Balakrishnan R."/>
            <person name="Costanzo M.C."/>
            <person name="Dwight S.S."/>
            <person name="Hitz B.C."/>
            <person name="Karra K."/>
            <person name="Nash R.S."/>
            <person name="Weng S."/>
            <person name="Wong E.D."/>
            <person name="Lloyd P."/>
            <person name="Skrzypek M.S."/>
            <person name="Miyasato S.R."/>
            <person name="Simison M."/>
            <person name="Cherry J.M."/>
        </authorList>
    </citation>
    <scope>GENOME REANNOTATION</scope>
    <source>
        <strain>ATCC 204508 / S288c</strain>
    </source>
</reference>
<reference key="3">
    <citation type="submission" date="2005-06" db="UniProtKB">
        <authorList>
            <person name="Bienvenut W.V."/>
            <person name="Peters C."/>
        </authorList>
    </citation>
    <scope>PROTEIN SEQUENCE OF 45-56; 85-103; 166-192 AND 197-221</scope>
    <scope>IDENTIFICATION BY MASS SPECTROMETRY</scope>
</reference>
<reference key="4">
    <citation type="journal article" date="2003" name="Nature">
        <title>Global analysis of protein localization in budding yeast.</title>
        <authorList>
            <person name="Huh W.-K."/>
            <person name="Falvo J.V."/>
            <person name="Gerke L.C."/>
            <person name="Carroll A.S."/>
            <person name="Howson R.W."/>
            <person name="Weissman J.S."/>
            <person name="O'Shea E.K."/>
        </authorList>
    </citation>
    <scope>SUBCELLULAR LOCATION [LARGE SCALE ANALYSIS]</scope>
</reference>
<reference key="5">
    <citation type="journal article" date="2003" name="Nature">
        <title>Global analysis of protein expression in yeast.</title>
        <authorList>
            <person name="Ghaemmaghami S."/>
            <person name="Huh W.-K."/>
            <person name="Bower K."/>
            <person name="Howson R.W."/>
            <person name="Belle A."/>
            <person name="Dephoure N."/>
            <person name="O'Shea E.K."/>
            <person name="Weissman J.S."/>
        </authorList>
    </citation>
    <scope>LEVEL OF PROTEIN EXPRESSION [LARGE SCALE ANALYSIS]</scope>
</reference>
<reference key="6">
    <citation type="journal article" date="2004" name="J. Biol. Chem.">
        <title>Pil1p and Lsp1p negatively regulate the 3-phosphoinositide-dependent protein kinase-like kinase Pkh1p and downstream signaling pathways Pkc1p and Ypk1p.</title>
        <authorList>
            <person name="Zhang X."/>
            <person name="Lester R.L."/>
            <person name="Dickson R.C."/>
        </authorList>
    </citation>
    <scope>FUNCTION</scope>
    <scope>PHOSPHORYLATION BY PKH1 AND PHK2</scope>
</reference>
<reference key="7">
    <citation type="journal article" date="2005" name="Mol. Cell. Proteomics">
        <title>Quantitative phosphoproteomics applied to the yeast pheromone signaling pathway.</title>
        <authorList>
            <person name="Gruhler A."/>
            <person name="Olsen J.V."/>
            <person name="Mohammed S."/>
            <person name="Mortensen P."/>
            <person name="Faergeman N.J."/>
            <person name="Mann M."/>
            <person name="Jensen O.N."/>
        </authorList>
    </citation>
    <scope>PHOSPHORYLATION [LARGE SCALE ANALYSIS] AT THR-233</scope>
    <scope>IDENTIFICATION BY MASS SPECTROMETRY [LARGE SCALE ANALYSIS]</scope>
    <source>
        <strain>YAL6B</strain>
    </source>
</reference>
<reference key="8">
    <citation type="journal article" date="2007" name="J. Proteome Res.">
        <title>Large-scale phosphorylation analysis of alpha-factor-arrested Saccharomyces cerevisiae.</title>
        <authorList>
            <person name="Li X."/>
            <person name="Gerber S.A."/>
            <person name="Rudner A.D."/>
            <person name="Beausoleil S.A."/>
            <person name="Haas W."/>
            <person name="Villen J."/>
            <person name="Elias J.E."/>
            <person name="Gygi S.P."/>
        </authorList>
    </citation>
    <scope>PHOSPHORYLATION [LARGE SCALE ANALYSIS] AT SER-163 AND THR-233</scope>
    <scope>IDENTIFICATION BY MASS SPECTROMETRY [LARGE SCALE ANALYSIS]</scope>
    <source>
        <strain>ADR376</strain>
    </source>
</reference>
<reference key="9">
    <citation type="journal article" date="2007" name="Mol. Cell. Proteomics">
        <title>Profiling phosphoproteins of yeast mitochondria reveals a role of phosphorylation in assembly of the ATP synthase.</title>
        <authorList>
            <person name="Reinders J."/>
            <person name="Wagner K."/>
            <person name="Zahedi R.P."/>
            <person name="Stojanovski D."/>
            <person name="Eyrich B."/>
            <person name="van der Laan M."/>
            <person name="Rehling P."/>
            <person name="Sickmann A."/>
            <person name="Pfanner N."/>
            <person name="Meisinger C."/>
        </authorList>
    </citation>
    <scope>PHOSPHORYLATION [LARGE SCALE ANALYSIS] AT THR-233</scope>
    <scope>IDENTIFICATION BY MASS SPECTROMETRY [LARGE SCALE ANALYSIS]</scope>
    <source>
        <strain>ATCC 76625 / YPH499</strain>
    </source>
</reference>
<reference key="10">
    <citation type="journal article" date="2008" name="Mol. Cell. Proteomics">
        <title>A multidimensional chromatography technology for in-depth phosphoproteome analysis.</title>
        <authorList>
            <person name="Albuquerque C.P."/>
            <person name="Smolka M.B."/>
            <person name="Payne S.H."/>
            <person name="Bafna V."/>
            <person name="Eng J."/>
            <person name="Zhou H."/>
        </authorList>
    </citation>
    <scope>PHOSPHORYLATION [LARGE SCALE ANALYSIS] AT SER-163; SER-230 AND THR-233</scope>
    <scope>IDENTIFICATION BY MASS SPECTROMETRY [LARGE SCALE ANALYSIS]</scope>
</reference>
<reference key="11">
    <citation type="journal article" date="2009" name="Science">
        <title>Global analysis of Cdk1 substrate phosphorylation sites provides insights into evolution.</title>
        <authorList>
            <person name="Holt L.J."/>
            <person name="Tuch B.B."/>
            <person name="Villen J."/>
            <person name="Johnson A.D."/>
            <person name="Gygi S.P."/>
            <person name="Morgan D.O."/>
        </authorList>
    </citation>
    <scope>PHOSPHORYLATION [LARGE SCALE ANALYSIS] AT THR-14; SER-16; SER-45; SER-98; SER-163; THR-233 AND SER-299</scope>
    <scope>IDENTIFICATION BY MASS SPECTROMETRY [LARGE SCALE ANALYSIS]</scope>
</reference>
<reference key="12">
    <citation type="journal article" date="2012" name="Proteomics">
        <title>Sites of ubiquitin attachment in Saccharomyces cerevisiae.</title>
        <authorList>
            <person name="Starita L.M."/>
            <person name="Lo R.S."/>
            <person name="Eng J.K."/>
            <person name="von Haller P.D."/>
            <person name="Fields S."/>
        </authorList>
    </citation>
    <scope>UBIQUITINATION [LARGE SCALE ANALYSIS] AT LYS-29</scope>
    <scope>IDENTIFICATION BY MASS SPECTROMETRY [LARGE SCALE ANALYSIS]</scope>
</reference>
<feature type="chain" id="PRO_0000058441" description="Sphingolipid long chain base-responsive protein PIL1">
    <location>
        <begin position="1"/>
        <end position="339"/>
    </location>
</feature>
<feature type="region of interest" description="Disordered" evidence="1">
    <location>
        <begin position="1"/>
        <end position="31"/>
    </location>
</feature>
<feature type="region of interest" description="Disordered" evidence="1">
    <location>
        <begin position="273"/>
        <end position="339"/>
    </location>
</feature>
<feature type="compositionally biased region" description="Polar residues" evidence="1">
    <location>
        <begin position="1"/>
        <end position="19"/>
    </location>
</feature>
<feature type="compositionally biased region" description="Acidic residues" evidence="1">
    <location>
        <begin position="279"/>
        <end position="293"/>
    </location>
</feature>
<feature type="compositionally biased region" description="Acidic residues" evidence="1">
    <location>
        <begin position="301"/>
        <end position="318"/>
    </location>
</feature>
<feature type="compositionally biased region" description="Polar residues" evidence="1">
    <location>
        <begin position="326"/>
        <end position="339"/>
    </location>
</feature>
<feature type="modified residue" description="Phosphothreonine" evidence="9">
    <location>
        <position position="14"/>
    </location>
</feature>
<feature type="modified residue" description="Phosphoserine" evidence="9">
    <location>
        <position position="16"/>
    </location>
</feature>
<feature type="modified residue" description="Phosphoserine" evidence="9">
    <location>
        <position position="45"/>
    </location>
</feature>
<feature type="modified residue" description="Phosphoserine" evidence="9">
    <location>
        <position position="98"/>
    </location>
</feature>
<feature type="modified residue" description="Phosphoserine" evidence="6 8 9">
    <location>
        <position position="163"/>
    </location>
</feature>
<feature type="modified residue" description="Phosphoserine" evidence="8">
    <location>
        <position position="230"/>
    </location>
</feature>
<feature type="modified residue" description="Phosphothreonine" evidence="5 6 7 8 9">
    <location>
        <position position="233"/>
    </location>
</feature>
<feature type="modified residue" description="Phosphoserine" evidence="9">
    <location>
        <position position="299"/>
    </location>
</feature>
<feature type="cross-link" description="Glycyl lysine isopeptide (Lys-Gly) (interchain with G-Cter in ubiquitin)" evidence="10">
    <location>
        <position position="29"/>
    </location>
</feature>
<feature type="strand" evidence="11">
    <location>
        <begin position="5"/>
        <end position="9"/>
    </location>
</feature>
<feature type="helix" evidence="11">
    <location>
        <begin position="15"/>
        <end position="19"/>
    </location>
</feature>
<feature type="helix" evidence="11">
    <location>
        <begin position="38"/>
        <end position="47"/>
    </location>
</feature>
<feature type="helix" evidence="11">
    <location>
        <begin position="57"/>
        <end position="89"/>
    </location>
</feature>
<feature type="helix" evidence="11">
    <location>
        <begin position="90"/>
        <end position="92"/>
    </location>
</feature>
<feature type="helix" evidence="11">
    <location>
        <begin position="95"/>
        <end position="159"/>
    </location>
</feature>
<feature type="turn" evidence="11">
    <location>
        <begin position="164"/>
        <end position="167"/>
    </location>
</feature>
<feature type="helix" evidence="11">
    <location>
        <begin position="168"/>
        <end position="223"/>
    </location>
</feature>
<feature type="helix" evidence="11">
    <location>
        <begin position="244"/>
        <end position="260"/>
    </location>
</feature>
<feature type="helix" evidence="11">
    <location>
        <begin position="263"/>
        <end position="265"/>
    </location>
</feature>
<comment type="function">
    <text evidence="4">Negative regulator of cell wall integrity (CWI) in unstressed cells, probably by inhibiting protein kinase PKH1/PHK2 activity and regulating their downstream CWI pathways PKC1-MAP kinase pathway and protein kinase YPK1 pathway. Activity may be regulated by the transient increase of sphingolipid long chain bases (LCBs) during heat stress.</text>
</comment>
<comment type="interaction">
    <interactant intactId="EBI-23225">
        <id>P53252</id>
    </interactant>
    <interactant intactId="EBI-28061">
        <id>Q05050</id>
        <label>EIS1</label>
    </interactant>
    <organismsDiffer>false</organismsDiffer>
    <experiments>4</experiments>
</comment>
<comment type="interaction">
    <interactant intactId="EBI-23225">
        <id>P53252</id>
    </interactant>
    <interactant intactId="EBI-34978">
        <id>Q12230</id>
        <label>LSP1</label>
    </interactant>
    <organismsDiffer>false</organismsDiffer>
    <experiments>7</experiments>
</comment>
<comment type="interaction">
    <interactant intactId="EBI-23225">
        <id>P53252</id>
    </interactant>
    <interactant intactId="EBI-16255">
        <id>P35719</id>
        <label>MRP8</label>
    </interactant>
    <organismsDiffer>false</organismsDiffer>
    <experiments>4</experiments>
</comment>
<comment type="interaction">
    <interactant intactId="EBI-23225">
        <id>P53252</id>
    </interactant>
    <interactant intactId="EBI-32467">
        <id>Q03407</id>
        <label>PKH1</label>
    </interactant>
    <organismsDiffer>false</organismsDiffer>
    <experiments>5</experiments>
</comment>
<comment type="subcellular location">
    <subcellularLocation>
        <location evidence="2">Lipid droplet</location>
    </subcellularLocation>
</comment>
<comment type="PTM">
    <text evidence="4">Phosphorylated by PKH1 and PKH2. Phosphorylation is inhibited by sphingolipid long chain bases (LCBs).</text>
</comment>
<comment type="miscellaneous">
    <text evidence="3">Present with 2157 molecules/cell in log phase SD medium.</text>
</comment>
<name>PIL1_YEAST</name>
<sequence length="339" mass="38349">MHRTYSLRNSRAPTASQLQNPPPPPSTTKGRFFGKGGLAYSFRRSAAGAFGPELSRKLSQLVKIEKNVLRSMELTANERRDAAKQLSIWGLENDDDVSDITDKLGVLIYEVSELDDQFIDRYDQYRLTLKSIRDIEGSVQPSRDRKDKITDKIAYLKYKDPQSPKIEVLEQELVRAEAESLVAEAQLSNITRSKLRAAFNYQFDSIIEHSEKIALIAGYGKALLELLDDSPVTPGETRPAYDGYEASKQIIIDAESALNEWTLDSAQVKPTLSFKQDYEDFEPEEGEEEEEEDGQGRWSEDEQEDGQIEEPEQEEEGAVEEHEQVGHQQSESLPQQTTA</sequence>